<organism>
    <name type="scientific">Rickettsia bellii (strain RML369-C)</name>
    <dbReference type="NCBI Taxonomy" id="336407"/>
    <lineage>
        <taxon>Bacteria</taxon>
        <taxon>Pseudomonadati</taxon>
        <taxon>Pseudomonadota</taxon>
        <taxon>Alphaproteobacteria</taxon>
        <taxon>Rickettsiales</taxon>
        <taxon>Rickettsiaceae</taxon>
        <taxon>Rickettsieae</taxon>
        <taxon>Rickettsia</taxon>
        <taxon>belli group</taxon>
    </lineage>
</organism>
<evidence type="ECO:0000250" key="1"/>
<evidence type="ECO:0000255" key="2"/>
<evidence type="ECO:0000305" key="3"/>
<accession>Q1RGT7</accession>
<feature type="chain" id="PRO_0000286507" description="Protein-export membrane protein SecG">
    <location>
        <begin position="1"/>
        <end position="100"/>
    </location>
</feature>
<feature type="transmembrane region" description="Helical" evidence="2">
    <location>
        <begin position="1"/>
        <end position="21"/>
    </location>
</feature>
<feature type="transmembrane region" description="Helical" evidence="2">
    <location>
        <begin position="54"/>
        <end position="74"/>
    </location>
</feature>
<sequence length="100" mass="10647">MLDILLFVHITIAILLIIVILMQRSGSDGISSISGGGNMGVISAKTANNFLTKSTVILASLFLINAIILANLSSQKKPDLVSKINEIEENQVDNSLPIAK</sequence>
<keyword id="KW-1003">Cell membrane</keyword>
<keyword id="KW-0472">Membrane</keyword>
<keyword id="KW-0653">Protein transport</keyword>
<keyword id="KW-0811">Translocation</keyword>
<keyword id="KW-0812">Transmembrane</keyword>
<keyword id="KW-1133">Transmembrane helix</keyword>
<keyword id="KW-0813">Transport</keyword>
<name>SECG_RICBR</name>
<comment type="function">
    <text evidence="1">Involved in protein export. Participates in an early event of protein translocation (By similarity).</text>
</comment>
<comment type="subcellular location">
    <subcellularLocation>
        <location evidence="1">Cell membrane</location>
        <topology evidence="1">Multi-pass membrane protein</topology>
    </subcellularLocation>
</comment>
<comment type="similarity">
    <text evidence="3">Belongs to the SecG family.</text>
</comment>
<protein>
    <recommendedName>
        <fullName>Protein-export membrane protein SecG</fullName>
    </recommendedName>
</protein>
<gene>
    <name type="primary">secG</name>
    <name type="ordered locus">RBE_1346</name>
</gene>
<dbReference type="EMBL" id="CP000087">
    <property type="protein sequence ID" value="ABE05427.1"/>
    <property type="molecule type" value="Genomic_DNA"/>
</dbReference>
<dbReference type="RefSeq" id="WP_011477996.1">
    <property type="nucleotide sequence ID" value="NC_007940.1"/>
</dbReference>
<dbReference type="SMR" id="Q1RGT7"/>
<dbReference type="KEGG" id="rbe:RBE_1346"/>
<dbReference type="eggNOG" id="COG1314">
    <property type="taxonomic scope" value="Bacteria"/>
</dbReference>
<dbReference type="HOGENOM" id="CLU_094156_4_2_5"/>
<dbReference type="Proteomes" id="UP000001951">
    <property type="component" value="Chromosome"/>
</dbReference>
<dbReference type="GO" id="GO:0005886">
    <property type="term" value="C:plasma membrane"/>
    <property type="evidence" value="ECO:0007669"/>
    <property type="project" value="UniProtKB-SubCell"/>
</dbReference>
<dbReference type="GO" id="GO:0015450">
    <property type="term" value="F:protein-transporting ATPase activity"/>
    <property type="evidence" value="ECO:0007669"/>
    <property type="project" value="InterPro"/>
</dbReference>
<dbReference type="GO" id="GO:0065002">
    <property type="term" value="P:intracellular protein transmembrane transport"/>
    <property type="evidence" value="ECO:0007669"/>
    <property type="project" value="TreeGrafter"/>
</dbReference>
<dbReference type="GO" id="GO:0009306">
    <property type="term" value="P:protein secretion"/>
    <property type="evidence" value="ECO:0007669"/>
    <property type="project" value="InterPro"/>
</dbReference>
<dbReference type="GO" id="GO:0043952">
    <property type="term" value="P:protein transport by the Sec complex"/>
    <property type="evidence" value="ECO:0007669"/>
    <property type="project" value="TreeGrafter"/>
</dbReference>
<dbReference type="InterPro" id="IPR004692">
    <property type="entry name" value="SecG"/>
</dbReference>
<dbReference type="NCBIfam" id="TIGR00810">
    <property type="entry name" value="secG"/>
    <property type="match status" value="1"/>
</dbReference>
<dbReference type="PANTHER" id="PTHR34182">
    <property type="entry name" value="PROTEIN-EXPORT MEMBRANE PROTEIN SECG"/>
    <property type="match status" value="1"/>
</dbReference>
<dbReference type="PANTHER" id="PTHR34182:SF1">
    <property type="entry name" value="PROTEIN-EXPORT MEMBRANE PROTEIN SECG"/>
    <property type="match status" value="1"/>
</dbReference>
<dbReference type="Pfam" id="PF03840">
    <property type="entry name" value="SecG"/>
    <property type="match status" value="1"/>
</dbReference>
<dbReference type="PRINTS" id="PR01651">
    <property type="entry name" value="SECGEXPORT"/>
</dbReference>
<reference key="1">
    <citation type="journal article" date="2006" name="PLoS Genet.">
        <title>Genome sequence of Rickettsia bellii illuminates the role of amoebae in gene exchanges between intracellular pathogens.</title>
        <authorList>
            <person name="Ogata H."/>
            <person name="La Scola B."/>
            <person name="Audic S."/>
            <person name="Renesto P."/>
            <person name="Blanc G."/>
            <person name="Robert C."/>
            <person name="Fournier P.-E."/>
            <person name="Claverie J.-M."/>
            <person name="Raoult D."/>
        </authorList>
    </citation>
    <scope>NUCLEOTIDE SEQUENCE [LARGE SCALE GENOMIC DNA]</scope>
    <source>
        <strain>RML369-C</strain>
    </source>
</reference>
<proteinExistence type="inferred from homology"/>